<protein>
    <recommendedName>
        <fullName evidence="1">Imidazolonepropionase</fullName>
        <ecNumber evidence="1">3.5.2.7</ecNumber>
    </recommendedName>
    <alternativeName>
        <fullName evidence="1">Imidazolone-5-propionate hydrolase</fullName>
    </alternativeName>
</protein>
<proteinExistence type="evidence at protein level"/>
<organism>
    <name type="scientific">Aeromonas hydrophila subsp. hydrophila (strain ATCC 7966 / DSM 30187 / BCRC 13018 / CCUG 14551 / JCM 1027 / KCTC 2358 / NCIMB 9240 / NCTC 8049)</name>
    <dbReference type="NCBI Taxonomy" id="380703"/>
    <lineage>
        <taxon>Bacteria</taxon>
        <taxon>Pseudomonadati</taxon>
        <taxon>Pseudomonadota</taxon>
        <taxon>Gammaproteobacteria</taxon>
        <taxon>Aeromonadales</taxon>
        <taxon>Aeromonadaceae</taxon>
        <taxon>Aeromonas</taxon>
    </lineage>
</organism>
<dbReference type="EC" id="3.5.2.7" evidence="1"/>
<dbReference type="EMBL" id="CP000462">
    <property type="protein sequence ID" value="ABK39901.1"/>
    <property type="status" value="ALT_INIT"/>
    <property type="molecule type" value="Genomic_DNA"/>
</dbReference>
<dbReference type="RefSeq" id="WP_164927515.1">
    <property type="nucleotide sequence ID" value="NC_008570.1"/>
</dbReference>
<dbReference type="RefSeq" id="YP_854906.1">
    <property type="nucleotide sequence ID" value="NC_008570.1"/>
</dbReference>
<dbReference type="PDB" id="2OOF">
    <property type="method" value="X-ray"/>
    <property type="resolution" value="2.20 A"/>
    <property type="chains" value="A=6-411"/>
</dbReference>
<dbReference type="PDB" id="2Q09">
    <property type="method" value="X-ray"/>
    <property type="resolution" value="1.97 A"/>
    <property type="chains" value="A=6-411"/>
</dbReference>
<dbReference type="PDBsum" id="2OOF"/>
<dbReference type="PDBsum" id="2Q09"/>
<dbReference type="SMR" id="A0KF84"/>
<dbReference type="STRING" id="380703.AHA_0377"/>
<dbReference type="EnsemblBacteria" id="ABK39901">
    <property type="protein sequence ID" value="ABK39901"/>
    <property type="gene ID" value="AHA_0377"/>
</dbReference>
<dbReference type="GeneID" id="4486961"/>
<dbReference type="KEGG" id="aha:AHA_0377"/>
<dbReference type="PATRIC" id="fig|380703.7.peg.364"/>
<dbReference type="eggNOG" id="COG1228">
    <property type="taxonomic scope" value="Bacteria"/>
</dbReference>
<dbReference type="HOGENOM" id="CLU_041647_0_0_6"/>
<dbReference type="OrthoDB" id="9776455at2"/>
<dbReference type="UniPathway" id="UPA00379">
    <property type="reaction ID" value="UER00551"/>
</dbReference>
<dbReference type="EvolutionaryTrace" id="A0KF84"/>
<dbReference type="Proteomes" id="UP000000756">
    <property type="component" value="Chromosome"/>
</dbReference>
<dbReference type="GO" id="GO:0005737">
    <property type="term" value="C:cytoplasm"/>
    <property type="evidence" value="ECO:0007669"/>
    <property type="project" value="UniProtKB-SubCell"/>
</dbReference>
<dbReference type="GO" id="GO:0050480">
    <property type="term" value="F:imidazolonepropionase activity"/>
    <property type="evidence" value="ECO:0007669"/>
    <property type="project" value="UniProtKB-UniRule"/>
</dbReference>
<dbReference type="GO" id="GO:0005506">
    <property type="term" value="F:iron ion binding"/>
    <property type="evidence" value="ECO:0007669"/>
    <property type="project" value="UniProtKB-UniRule"/>
</dbReference>
<dbReference type="GO" id="GO:0008270">
    <property type="term" value="F:zinc ion binding"/>
    <property type="evidence" value="ECO:0007669"/>
    <property type="project" value="UniProtKB-UniRule"/>
</dbReference>
<dbReference type="GO" id="GO:0019556">
    <property type="term" value="P:L-histidine catabolic process to glutamate and formamide"/>
    <property type="evidence" value="ECO:0007669"/>
    <property type="project" value="UniProtKB-UniPathway"/>
</dbReference>
<dbReference type="GO" id="GO:0019557">
    <property type="term" value="P:L-histidine catabolic process to glutamate and formate"/>
    <property type="evidence" value="ECO:0007669"/>
    <property type="project" value="UniProtKB-UniPathway"/>
</dbReference>
<dbReference type="FunFam" id="3.20.20.140:FF:000007">
    <property type="entry name" value="Imidazolonepropionase"/>
    <property type="match status" value="1"/>
</dbReference>
<dbReference type="Gene3D" id="3.20.20.140">
    <property type="entry name" value="Metal-dependent hydrolases"/>
    <property type="match status" value="1"/>
</dbReference>
<dbReference type="Gene3D" id="2.30.40.10">
    <property type="entry name" value="Urease, subunit C, domain 1"/>
    <property type="match status" value="1"/>
</dbReference>
<dbReference type="HAMAP" id="MF_00372">
    <property type="entry name" value="HutI"/>
    <property type="match status" value="1"/>
</dbReference>
<dbReference type="InterPro" id="IPR006680">
    <property type="entry name" value="Amidohydro-rel"/>
</dbReference>
<dbReference type="InterPro" id="IPR005920">
    <property type="entry name" value="HutI"/>
</dbReference>
<dbReference type="InterPro" id="IPR011059">
    <property type="entry name" value="Metal-dep_hydrolase_composite"/>
</dbReference>
<dbReference type="InterPro" id="IPR032466">
    <property type="entry name" value="Metal_Hydrolase"/>
</dbReference>
<dbReference type="NCBIfam" id="TIGR01224">
    <property type="entry name" value="hutI"/>
    <property type="match status" value="1"/>
</dbReference>
<dbReference type="PANTHER" id="PTHR42752">
    <property type="entry name" value="IMIDAZOLONEPROPIONASE"/>
    <property type="match status" value="1"/>
</dbReference>
<dbReference type="PANTHER" id="PTHR42752:SF1">
    <property type="entry name" value="IMIDAZOLONEPROPIONASE-RELATED"/>
    <property type="match status" value="1"/>
</dbReference>
<dbReference type="Pfam" id="PF01979">
    <property type="entry name" value="Amidohydro_1"/>
    <property type="match status" value="1"/>
</dbReference>
<dbReference type="SUPFAM" id="SSF51338">
    <property type="entry name" value="Composite domain of metallo-dependent hydrolases"/>
    <property type="match status" value="1"/>
</dbReference>
<dbReference type="SUPFAM" id="SSF51556">
    <property type="entry name" value="Metallo-dependent hydrolases"/>
    <property type="match status" value="1"/>
</dbReference>
<reference key="1">
    <citation type="journal article" date="2006" name="J. Bacteriol.">
        <title>Genome sequence of Aeromonas hydrophila ATCC 7966T: jack of all trades.</title>
        <authorList>
            <person name="Seshadri R."/>
            <person name="Joseph S.W."/>
            <person name="Chopra A.K."/>
            <person name="Sha J."/>
            <person name="Shaw J."/>
            <person name="Graf J."/>
            <person name="Haft D.H."/>
            <person name="Wu M."/>
            <person name="Ren Q."/>
            <person name="Rosovitz M.J."/>
            <person name="Madupu R."/>
            <person name="Tallon L."/>
            <person name="Kim M."/>
            <person name="Jin S."/>
            <person name="Vuong H."/>
            <person name="Stine O.C."/>
            <person name="Ali A."/>
            <person name="Horneman A.J."/>
            <person name="Heidelberg J.F."/>
        </authorList>
    </citation>
    <scope>NUCLEOTIDE SEQUENCE [LARGE SCALE GENOMIC DNA]</scope>
    <source>
        <strain>ATCC 7966 / DSM 30187 / BCRC 13018 / CCUG 14551 / JCM 1027 / KCTC 2358 / NCIMB 9240 / NCTC 8049</strain>
    </source>
</reference>
<reference evidence="6" key="2">
    <citation type="submission" date="2007-01" db="PDB data bank">
        <title>The crystal structure of 4-imidazolone-5-propanoate amidohydrolase from environmental sample.</title>
        <authorList>
            <person name="Tyagi R."/>
            <person name="Eswaramoorthy S."/>
            <person name="Burley S.K."/>
            <person name="Swaminathan S."/>
        </authorList>
    </citation>
    <scope>X-RAY CRYSTALLOGRAPHY (2.20 ANGSTROMS) OF 6-411 IN COMPLEX WITH IRON IONS</scope>
</reference>
<reference evidence="7" key="3">
    <citation type="journal article" date="2008" name="Biochemistry">
        <title>A common catalytic mechanism for proteins of the HutI family.</title>
        <authorList>
            <person name="Tyagi R."/>
            <person name="Eswaramoorthy S."/>
            <person name="Burley S.K."/>
            <person name="Raushel F.M."/>
            <person name="Swaminathan S."/>
        </authorList>
    </citation>
    <scope>X-RAY CRYSTALLOGRAPHY (1.97 ANGSTROMS) OF 6-411 IN COMPLEX WITH IRON IONS AND SUBSTRATE ANALOG 3-(2,5-DIOXO-IMIDAZOLIDIN-4-YL)-PROPANOATE</scope>
</reference>
<gene>
    <name evidence="1" type="primary">hutI</name>
    <name type="ordered locus">AHA_0377</name>
</gene>
<keyword id="KW-0002">3D-structure</keyword>
<keyword id="KW-0963">Cytoplasm</keyword>
<keyword id="KW-0369">Histidine metabolism</keyword>
<keyword id="KW-0378">Hydrolase</keyword>
<keyword id="KW-0408">Iron</keyword>
<keyword id="KW-0479">Metal-binding</keyword>
<keyword id="KW-1185">Reference proteome</keyword>
<keyword id="KW-0862">Zinc</keyword>
<name>HUTI_AERHH</name>
<comment type="function">
    <text evidence="1">Catalyzes the hydrolytic cleavage of the carbon-nitrogen bond in imidazolone-5-propanoate to yield N-formimidoyl-L-glutamate. It is the third step in the universal histidine degradation pathway.</text>
</comment>
<comment type="catalytic activity">
    <reaction evidence="1">
        <text>4-imidazolone-5-propanoate + H2O = N-formimidoyl-L-glutamate</text>
        <dbReference type="Rhea" id="RHEA:23660"/>
        <dbReference type="ChEBI" id="CHEBI:15377"/>
        <dbReference type="ChEBI" id="CHEBI:58928"/>
        <dbReference type="ChEBI" id="CHEBI:77893"/>
        <dbReference type="EC" id="3.5.2.7"/>
    </reaction>
</comment>
<comment type="cofactor">
    <cofactor evidence="1">
        <name>Zn(2+)</name>
        <dbReference type="ChEBI" id="CHEBI:29105"/>
    </cofactor>
    <cofactor evidence="4 5">
        <name>Fe(3+)</name>
        <dbReference type="ChEBI" id="CHEBI:29034"/>
    </cofactor>
    <text evidence="1">Binds 1 zinc or iron ion per subunit.</text>
</comment>
<comment type="pathway">
    <text evidence="1">Amino-acid degradation; L-histidine degradation into L-glutamate; N-formimidoyl-L-glutamate from L-histidine: step 3/3.</text>
</comment>
<comment type="subcellular location">
    <subcellularLocation>
        <location evidence="1">Cytoplasm</location>
    </subcellularLocation>
</comment>
<comment type="similarity">
    <text evidence="1">Belongs to the metallo-dependent hydrolases superfamily. HutI family.</text>
</comment>
<comment type="sequence caution" evidence="3">
    <conflict type="erroneous initiation">
        <sequence resource="EMBL-CDS" id="ABK39901"/>
    </conflict>
</comment>
<evidence type="ECO:0000255" key="1">
    <source>
        <dbReference type="HAMAP-Rule" id="MF_00372"/>
    </source>
</evidence>
<evidence type="ECO:0000269" key="2">
    <source>
    </source>
</evidence>
<evidence type="ECO:0000305" key="3"/>
<evidence type="ECO:0000305" key="4">
    <source>
    </source>
</evidence>
<evidence type="ECO:0000305" key="5">
    <source ref="2"/>
</evidence>
<evidence type="ECO:0007744" key="6">
    <source>
        <dbReference type="PDB" id="2OOF"/>
    </source>
</evidence>
<evidence type="ECO:0007744" key="7">
    <source>
        <dbReference type="PDB" id="2Q09"/>
    </source>
</evidence>
<evidence type="ECO:0007829" key="8">
    <source>
        <dbReference type="PDB" id="2Q09"/>
    </source>
</evidence>
<feature type="chain" id="PRO_0000306422" description="Imidazolonepropionase">
    <location>
        <begin position="1"/>
        <end position="411"/>
    </location>
</feature>
<feature type="binding site" evidence="2 6 7">
    <location>
        <position position="75"/>
    </location>
    <ligand>
        <name>Fe(3+)</name>
        <dbReference type="ChEBI" id="CHEBI:29034"/>
    </ligand>
</feature>
<feature type="binding site" evidence="1">
    <location>
        <position position="75"/>
    </location>
    <ligand>
        <name>Zn(2+)</name>
        <dbReference type="ChEBI" id="CHEBI:29105"/>
    </ligand>
</feature>
<feature type="binding site" evidence="2 6 7">
    <location>
        <position position="77"/>
    </location>
    <ligand>
        <name>Fe(3+)</name>
        <dbReference type="ChEBI" id="CHEBI:29034"/>
    </ligand>
</feature>
<feature type="binding site" evidence="1">
    <location>
        <position position="77"/>
    </location>
    <ligand>
        <name>Zn(2+)</name>
        <dbReference type="ChEBI" id="CHEBI:29105"/>
    </ligand>
</feature>
<feature type="binding site" evidence="4 7">
    <location>
        <position position="84"/>
    </location>
    <ligand>
        <name>4-imidazolone-5-propanoate</name>
        <dbReference type="ChEBI" id="CHEBI:77893"/>
    </ligand>
</feature>
<feature type="binding site" evidence="4 7">
    <location>
        <position position="147"/>
    </location>
    <ligand>
        <name>4-imidazolone-5-propanoate</name>
        <dbReference type="ChEBI" id="CHEBI:77893"/>
    </ligand>
</feature>
<feature type="binding site" evidence="1">
    <location>
        <position position="147"/>
    </location>
    <ligand>
        <name>N-formimidoyl-L-glutamate</name>
        <dbReference type="ChEBI" id="CHEBI:58928"/>
    </ligand>
</feature>
<feature type="binding site" evidence="4 7">
    <location>
        <position position="180"/>
    </location>
    <ligand>
        <name>4-imidazolone-5-propanoate</name>
        <dbReference type="ChEBI" id="CHEBI:77893"/>
    </ligand>
</feature>
<feature type="binding site" evidence="2 6 7">
    <location>
        <position position="245"/>
    </location>
    <ligand>
        <name>Fe(3+)</name>
        <dbReference type="ChEBI" id="CHEBI:29034"/>
    </ligand>
</feature>
<feature type="binding site" evidence="1">
    <location>
        <position position="245"/>
    </location>
    <ligand>
        <name>Zn(2+)</name>
        <dbReference type="ChEBI" id="CHEBI:29105"/>
    </ligand>
</feature>
<feature type="binding site" evidence="4 7">
    <location>
        <position position="248"/>
    </location>
    <ligand>
        <name>4-imidazolone-5-propanoate</name>
        <dbReference type="ChEBI" id="CHEBI:77893"/>
    </ligand>
</feature>
<feature type="binding site" evidence="2 6 7">
    <location>
        <position position="320"/>
    </location>
    <ligand>
        <name>Fe(3+)</name>
        <dbReference type="ChEBI" id="CHEBI:29034"/>
    </ligand>
</feature>
<feature type="binding site" evidence="1">
    <location>
        <position position="320"/>
    </location>
    <ligand>
        <name>Zn(2+)</name>
        <dbReference type="ChEBI" id="CHEBI:29105"/>
    </ligand>
</feature>
<feature type="binding site" evidence="1">
    <location>
        <position position="322"/>
    </location>
    <ligand>
        <name>N-formimidoyl-L-glutamate</name>
        <dbReference type="ChEBI" id="CHEBI:58928"/>
    </ligand>
</feature>
<feature type="binding site" evidence="1">
    <location>
        <position position="324"/>
    </location>
    <ligand>
        <name>N-formimidoyl-L-glutamate</name>
        <dbReference type="ChEBI" id="CHEBI:58928"/>
    </ligand>
</feature>
<feature type="binding site" evidence="4 7">
    <location>
        <position position="325"/>
    </location>
    <ligand>
        <name>4-imidazolone-5-propanoate</name>
        <dbReference type="ChEBI" id="CHEBI:77893"/>
    </ligand>
</feature>
<feature type="strand" evidence="8">
    <location>
        <begin position="9"/>
        <end position="18"/>
    </location>
</feature>
<feature type="strand" evidence="8">
    <location>
        <begin position="31"/>
        <end position="38"/>
    </location>
</feature>
<feature type="strand" evidence="8">
    <location>
        <begin position="41"/>
        <end position="47"/>
    </location>
</feature>
<feature type="helix" evidence="8">
    <location>
        <begin position="48"/>
        <end position="50"/>
    </location>
</feature>
<feature type="strand" evidence="8">
    <location>
        <begin position="59"/>
        <end position="61"/>
    </location>
</feature>
<feature type="strand" evidence="8">
    <location>
        <begin position="66"/>
        <end position="69"/>
    </location>
</feature>
<feature type="strand" evidence="8">
    <location>
        <begin position="71"/>
        <end position="76"/>
    </location>
</feature>
<feature type="helix" evidence="8">
    <location>
        <begin position="85"/>
        <end position="92"/>
    </location>
</feature>
<feature type="helix" evidence="8">
    <location>
        <begin position="97"/>
        <end position="102"/>
    </location>
</feature>
<feature type="helix" evidence="8">
    <location>
        <begin position="107"/>
        <end position="116"/>
    </location>
</feature>
<feature type="helix" evidence="8">
    <location>
        <begin position="119"/>
        <end position="135"/>
    </location>
</feature>
<feature type="strand" evidence="8">
    <location>
        <begin position="138"/>
        <end position="144"/>
    </location>
</feature>
<feature type="helix" evidence="8">
    <location>
        <begin position="151"/>
        <end position="167"/>
    </location>
</feature>
<feature type="strand" evidence="8">
    <location>
        <begin position="168"/>
        <end position="179"/>
    </location>
</feature>
<feature type="helix" evidence="8">
    <location>
        <begin position="184"/>
        <end position="186"/>
    </location>
</feature>
<feature type="helix" evidence="8">
    <location>
        <begin position="190"/>
        <end position="199"/>
    </location>
</feature>
<feature type="helix" evidence="8">
    <location>
        <begin position="201"/>
        <end position="207"/>
    </location>
</feature>
<feature type="strand" evidence="8">
    <location>
        <begin position="212"/>
        <end position="219"/>
    </location>
</feature>
<feature type="helix" evidence="8">
    <location>
        <begin position="225"/>
        <end position="237"/>
    </location>
</feature>
<feature type="strand" evidence="8">
    <location>
        <begin position="241"/>
        <end position="249"/>
    </location>
</feature>
<feature type="helix" evidence="8">
    <location>
        <begin position="254"/>
        <end position="260"/>
    </location>
</feature>
<feature type="strand" evidence="8">
    <location>
        <begin position="264"/>
        <end position="268"/>
    </location>
</feature>
<feature type="helix" evidence="8">
    <location>
        <begin position="274"/>
        <end position="283"/>
    </location>
</feature>
<feature type="strand" evidence="8">
    <location>
        <begin position="286"/>
        <end position="289"/>
    </location>
</feature>
<feature type="helix" evidence="8">
    <location>
        <begin position="291"/>
        <end position="296"/>
    </location>
</feature>
<feature type="helix" evidence="8">
    <location>
        <begin position="305"/>
        <end position="310"/>
    </location>
</feature>
<feature type="strand" evidence="8">
    <location>
        <begin position="315"/>
        <end position="317"/>
    </location>
</feature>
<feature type="turn" evidence="8">
    <location>
        <begin position="323"/>
        <end position="325"/>
    </location>
</feature>
<feature type="helix" evidence="8">
    <location>
        <begin position="331"/>
        <end position="342"/>
    </location>
</feature>
<feature type="helix" evidence="8">
    <location>
        <begin position="346"/>
        <end position="352"/>
    </location>
</feature>
<feature type="helix" evidence="8">
    <location>
        <begin position="355"/>
        <end position="360"/>
    </location>
</feature>
<feature type="turn" evidence="8">
    <location>
        <begin position="364"/>
        <end position="366"/>
    </location>
</feature>
<feature type="strand" evidence="8">
    <location>
        <begin position="367"/>
        <end position="369"/>
    </location>
</feature>
<feature type="strand" evidence="8">
    <location>
        <begin position="378"/>
        <end position="384"/>
    </location>
</feature>
<feature type="helix" evidence="8">
    <location>
        <begin position="388"/>
        <end position="391"/>
    </location>
</feature>
<feature type="strand" evidence="8">
    <location>
        <begin position="398"/>
        <end position="403"/>
    </location>
</feature>
<accession>A0KF84</accession>
<sequence length="411" mass="44543">MNKELLNCERVWLNVTPATLRSDLADYGLLEPHALGVHEGRIHALVPMQDLKGPYPAHWQDMKGKLVTPGLIDCHTHLIFAGSRAEEFELRQKGVPYAEIARKGGGIISTVRATRAACEEQLFELALPRVKSLIREGVTTVEIKSGYGLTLEDELKMLRVARRLGEALPIRVKTTLLAAHAVPPEYRDDPDSWVETICQEIIPAAAEAGLADAVDVFCEHIGFSLAQTEQVYLAADQYGLAVKGHMDQLSNLGGSTLAANFGALSVDHLEYLDPEGIQALAHRGVVATLLPTAFYFLKETKLPPVAALRKAGVPMAVSSDINPGTAPIVSLRMAMNMACTLFGLTPVEAMAGVTRHAARALGEQEQLGQLRVGMLADFLVWNCGHPAELSYLIGVDQLVSRVINGEETLHG</sequence>